<feature type="chain" id="PRO_0000066884" description="Ankyrin-1">
    <location>
        <begin position="1"/>
        <end position="1862"/>
    </location>
</feature>
<feature type="repeat" description="ANK 1">
    <location>
        <begin position="40"/>
        <end position="69"/>
    </location>
</feature>
<feature type="repeat" description="ANK 2">
    <location>
        <begin position="73"/>
        <end position="102"/>
    </location>
</feature>
<feature type="repeat" description="ANK 3">
    <location>
        <begin position="106"/>
        <end position="135"/>
    </location>
</feature>
<feature type="repeat" description="ANK 4">
    <location>
        <begin position="139"/>
        <end position="168"/>
    </location>
</feature>
<feature type="repeat" description="ANK 5">
    <location>
        <begin position="170"/>
        <end position="197"/>
    </location>
</feature>
<feature type="repeat" description="ANK 6">
    <location>
        <begin position="201"/>
        <end position="230"/>
    </location>
</feature>
<feature type="repeat" description="ANK 7">
    <location>
        <begin position="234"/>
        <end position="263"/>
    </location>
</feature>
<feature type="repeat" description="ANK 8">
    <location>
        <begin position="267"/>
        <end position="296"/>
    </location>
</feature>
<feature type="repeat" description="ANK 9">
    <location>
        <begin position="300"/>
        <end position="329"/>
    </location>
</feature>
<feature type="repeat" description="ANK 10">
    <location>
        <begin position="333"/>
        <end position="362"/>
    </location>
</feature>
<feature type="repeat" description="ANK 11">
    <location>
        <begin position="366"/>
        <end position="395"/>
    </location>
</feature>
<feature type="repeat" description="ANK 12">
    <location>
        <begin position="399"/>
        <end position="428"/>
    </location>
</feature>
<feature type="repeat" description="ANK 13">
    <location>
        <begin position="432"/>
        <end position="461"/>
    </location>
</feature>
<feature type="repeat" description="ANK 14">
    <location>
        <begin position="465"/>
        <end position="494"/>
    </location>
</feature>
<feature type="repeat" description="ANK 15">
    <location>
        <begin position="498"/>
        <end position="527"/>
    </location>
</feature>
<feature type="repeat" description="ANK 16">
    <location>
        <begin position="531"/>
        <end position="560"/>
    </location>
</feature>
<feature type="repeat" description="ANK 17">
    <location>
        <begin position="564"/>
        <end position="593"/>
    </location>
</feature>
<feature type="repeat" description="ANK 18">
    <location>
        <begin position="597"/>
        <end position="626"/>
    </location>
</feature>
<feature type="repeat" description="ANK 19">
    <location>
        <begin position="630"/>
        <end position="659"/>
    </location>
</feature>
<feature type="repeat" description="ANK 20">
    <location>
        <begin position="663"/>
        <end position="692"/>
    </location>
</feature>
<feature type="repeat" description="ANK 21">
    <location>
        <begin position="696"/>
        <end position="725"/>
    </location>
</feature>
<feature type="repeat" description="ANK 22">
    <location>
        <begin position="729"/>
        <end position="758"/>
    </location>
</feature>
<feature type="repeat" description="ANK 23">
    <location>
        <begin position="762"/>
        <end position="791"/>
    </location>
</feature>
<feature type="domain" description="ZU5 1" evidence="4">
    <location>
        <begin position="909"/>
        <end position="1064"/>
    </location>
</feature>
<feature type="domain" description="ZU5 2" evidence="4">
    <location>
        <begin position="1066"/>
        <end position="1212"/>
    </location>
</feature>
<feature type="domain" description="Death" evidence="3">
    <location>
        <begin position="1399"/>
        <end position="1483"/>
    </location>
</feature>
<feature type="region of interest" description="89 kDa domain">
    <location>
        <begin position="1"/>
        <end position="827"/>
    </location>
</feature>
<feature type="region of interest" description="Disordered" evidence="5">
    <location>
        <begin position="812"/>
        <end position="834"/>
    </location>
</feature>
<feature type="region of interest" description="Disordered" evidence="5">
    <location>
        <begin position="872"/>
        <end position="900"/>
    </location>
</feature>
<feature type="region of interest" description="UPA domain" evidence="1">
    <location>
        <begin position="1197"/>
        <end position="1331"/>
    </location>
</feature>
<feature type="region of interest" description="55 kDa regulatory domain">
    <location>
        <begin position="1387"/>
        <end position="1862"/>
    </location>
</feature>
<feature type="region of interest" description="Disordered" evidence="5">
    <location>
        <begin position="1481"/>
        <end position="1506"/>
    </location>
</feature>
<feature type="region of interest" description="Disordered" evidence="5">
    <location>
        <begin position="1598"/>
        <end position="1720"/>
    </location>
</feature>
<feature type="region of interest" description="Disordered" evidence="5">
    <location>
        <begin position="1744"/>
        <end position="1767"/>
    </location>
</feature>
<feature type="compositionally biased region" description="Basic and acidic residues" evidence="5">
    <location>
        <begin position="824"/>
        <end position="834"/>
    </location>
</feature>
<feature type="compositionally biased region" description="Polar residues" evidence="5">
    <location>
        <begin position="886"/>
        <end position="900"/>
    </location>
</feature>
<feature type="compositionally biased region" description="Basic and acidic residues" evidence="5">
    <location>
        <begin position="1489"/>
        <end position="1500"/>
    </location>
</feature>
<feature type="compositionally biased region" description="Basic and acidic residues" evidence="5">
    <location>
        <begin position="1637"/>
        <end position="1647"/>
    </location>
</feature>
<feature type="compositionally biased region" description="Polar residues" evidence="5">
    <location>
        <begin position="1648"/>
        <end position="1666"/>
    </location>
</feature>
<feature type="compositionally biased region" description="Basic and acidic residues" evidence="5">
    <location>
        <begin position="1681"/>
        <end position="1694"/>
    </location>
</feature>
<feature type="compositionally biased region" description="Polar residues" evidence="5">
    <location>
        <begin position="1695"/>
        <end position="1720"/>
    </location>
</feature>
<feature type="modified residue" description="(3S)-3-hydroxyasparagine; by HIF1AN; partial" evidence="6">
    <location>
        <position position="101"/>
    </location>
</feature>
<feature type="modified residue" description="(3S)-3-hydroxyasparagine; by HIF1AN" evidence="1">
    <location>
        <position position="229"/>
    </location>
</feature>
<feature type="modified residue" description="Phosphoserine" evidence="2">
    <location>
        <position position="425"/>
    </location>
</feature>
<feature type="modified residue" description="(3S)-3-hydroxyasparagine; by HIF1AN" evidence="1">
    <location>
        <position position="427"/>
    </location>
</feature>
<feature type="modified residue" description="(3S)-3-hydroxyasparagine; by HIF1AN" evidence="1">
    <location>
        <position position="460"/>
    </location>
</feature>
<feature type="modified residue" description="(3S)-3-hydroxyasparagine; by HIF1AN" evidence="1">
    <location>
        <position position="625"/>
    </location>
</feature>
<feature type="modified residue" description="(3S)-3-hydroxyasparagine; by HIF1AN" evidence="1">
    <location>
        <position position="658"/>
    </location>
</feature>
<feature type="modified residue" description="(3S)-3-hydroxyaspartate; by HIF1AN" evidence="1">
    <location>
        <position position="691"/>
    </location>
</feature>
<feature type="modified residue" description="(3S)-3-hydroxyasparagine; by HIF1AN" evidence="1">
    <location>
        <position position="724"/>
    </location>
</feature>
<feature type="modified residue" description="Phosphoserine" evidence="2">
    <location>
        <position position="755"/>
    </location>
</feature>
<feature type="modified residue" description="(3S)-3-hydroxyasparagine; by HIF1AN" evidence="1">
    <location>
        <position position="757"/>
    </location>
</feature>
<feature type="modified residue" description="Phosphoserine" evidence="16">
    <location>
        <position position="777"/>
    </location>
</feature>
<feature type="modified residue" description="Phosphoserine" evidence="16">
    <location>
        <position position="813"/>
    </location>
</feature>
<feature type="modified residue" description="Phosphoserine" evidence="2">
    <location>
        <position position="830"/>
    </location>
</feature>
<feature type="modified residue" description="Phosphoserine" evidence="13 16">
    <location>
        <position position="852"/>
    </location>
</feature>
<feature type="modified residue" description="Phosphothreonine" evidence="13 16">
    <location>
        <position position="862"/>
    </location>
</feature>
<feature type="modified residue" description="Phosphothreonine" evidence="14 16">
    <location>
        <position position="957"/>
    </location>
</feature>
<feature type="modified residue" description="Phosphotyrosine" evidence="15">
    <location>
        <position position="1069"/>
    </location>
</feature>
<feature type="modified residue" description="Phosphoserine" evidence="16">
    <location>
        <position position="1078"/>
    </location>
</feature>
<feature type="modified residue" description="Phosphothreonine" evidence="2">
    <location>
        <position position="1374"/>
    </location>
</feature>
<feature type="modified residue" description="Phosphothreonine" evidence="2">
    <location>
        <position position="1376"/>
    </location>
</feature>
<feature type="modified residue" description="Phosphoserine" evidence="16">
    <location>
        <position position="1386"/>
    </location>
</feature>
<feature type="modified residue" description="Phosphoserine" evidence="14 16">
    <location>
        <position position="1388"/>
    </location>
</feature>
<feature type="modified residue" description="Phosphothreonine" evidence="16">
    <location>
        <position position="1396"/>
    </location>
</feature>
<feature type="modified residue" description="Phosphoserine" evidence="16">
    <location>
        <position position="1424"/>
    </location>
</feature>
<feature type="modified residue" description="Phosphoserine" evidence="16">
    <location>
        <position position="1473"/>
    </location>
</feature>
<feature type="modified residue" description="Phosphoserine" evidence="16">
    <location>
        <position position="1482"/>
    </location>
</feature>
<feature type="modified residue" description="Phosphoserine" evidence="2">
    <location>
        <position position="1519"/>
    </location>
</feature>
<feature type="modified residue" description="Phosphoserine" evidence="2">
    <location>
        <position position="1529"/>
    </location>
</feature>
<feature type="modified residue" description="Phosphoserine" evidence="16">
    <location>
        <position position="1612"/>
    </location>
</feature>
<feature type="modified residue" description="Phosphoserine" evidence="2">
    <location>
        <position position="1660"/>
    </location>
</feature>
<feature type="modified residue" description="Phosphoserine" evidence="2">
    <location>
        <position position="1675"/>
    </location>
</feature>
<feature type="modified residue" description="Phosphoserine" evidence="2">
    <location>
        <position position="1685"/>
    </location>
</feature>
<feature type="splice variant" id="VSP_018452" description="In isoform Mu7 and isoform Mu8." evidence="7 8 10">
    <location>
        <begin position="1"/>
        <end position="1707"/>
    </location>
</feature>
<feature type="splice variant" id="VSP_018453" description="In isoform Br2." evidence="8 9">
    <original>MGFCK</original>
    <variation>MAERPRRSGSDPA</variation>
    <location>
        <begin position="1"/>
        <end position="5"/>
    </location>
</feature>
<feature type="splice variant" id="VSP_018454" description="In isoform 5 and isoform 6." evidence="8">
    <original>MGFC</original>
    <variation>MAQAAKQLKKIKDIEAQALQEQKEKEESNRKRRNRSRDRKK</variation>
    <location>
        <begin position="1"/>
        <end position="4"/>
    </location>
</feature>
<feature type="splice variant" id="VSP_018455" description="In isoform Br2 and isoform 6." evidence="8 9">
    <original>G</original>
    <variation>GTAHISIMG</variation>
    <location>
        <position position="817"/>
    </location>
</feature>
<feature type="splice variant" id="VSP_018456" description="In isoform 5." evidence="8">
    <location>
        <begin position="1510"/>
        <end position="1664"/>
    </location>
</feature>
<feature type="splice variant" id="VSP_018457" description="In isoform Br2." evidence="8 9">
    <location>
        <begin position="1636"/>
        <end position="1665"/>
    </location>
</feature>
<feature type="splice variant" id="VSP_018458" description="In isoform Mu7 and isoform Mu8." evidence="7 8 10">
    <original>SSWQEEVTQGPHSFQRRITTIQGPEPGALQEYEQVLVSTREHVQRGPPETGSPKAGKEPSLWAPESAFSQEVQ</original>
    <variation>MWTFITQLLVTLVLLGFFLVSCQNVMHIVKGSLCFVLKHIHQELDKELGESEGLSDDEETISTRVVRRRVFLK</variation>
    <location>
        <begin position="1708"/>
        <end position="1780"/>
    </location>
</feature>
<feature type="splice variant" id="VSP_018459" description="In isoform Br4." evidence="9">
    <original>V</original>
    <variation>VIVEGPLADPGDLEADIESFMKLTKV</variation>
    <location>
        <position position="1831"/>
    </location>
</feature>
<feature type="splice variant" id="VSP_018460" description="In isoform Er3 and isoform Mu8." evidence="8 9">
    <original>ELRGSGLQPDLIEGRKGAQIVKRASLKRGKQ</original>
    <variation>IVEGPLADPGDLEADIESFMKLTKDHTSTPKP</variation>
    <location>
        <begin position="1832"/>
        <end position="1862"/>
    </location>
</feature>
<feature type="sequence conflict" description="In Ref. 3; BAE34375." evidence="11" ref="3">
    <original>A</original>
    <variation>T</variation>
    <location>
        <position position="507"/>
    </location>
</feature>
<feature type="sequence conflict" description="In Ref. 1; AAA37236." evidence="11" ref="1">
    <original>P</original>
    <variation>L</variation>
    <location>
        <position position="678"/>
    </location>
</feature>
<feature type="sequence conflict" description="In Ref. 3; BAE34375." evidence="11" ref="3">
    <original>D</original>
    <variation>G</variation>
    <location>
        <position position="818"/>
    </location>
</feature>
<feature type="sequence conflict" description="In Ref. 2; CAA48801." evidence="11" ref="2">
    <original>K</original>
    <variation>N</variation>
    <location>
        <position position="1098"/>
    </location>
</feature>
<feature type="sequence conflict" description="In Ref. 2; CAA48801." evidence="11" ref="2">
    <original>G</original>
    <variation>V</variation>
    <location>
        <position position="1481"/>
    </location>
</feature>
<feature type="sequence conflict" description="In Ref. 3; BAE27815/BAE28015." evidence="11" ref="3">
    <original>T</original>
    <variation>A</variation>
    <location>
        <position position="1541"/>
    </location>
</feature>
<feature type="sequence conflict" description="In Ref. 3; BAE28015." evidence="11" ref="3">
    <original>K</original>
    <variation>R</variation>
    <location>
        <position position="1644"/>
    </location>
</feature>
<feature type="modified residue" description="Phosphoserine" evidence="16">
    <location sequence="Q02357-7">
        <position position="55"/>
    </location>
</feature>
<feature type="modified residue" description="Phosphoserine" evidence="16">
    <location sequence="Q02357-8">
        <position position="55"/>
    </location>
</feature>
<protein>
    <recommendedName>
        <fullName evidence="11">Ankyrin-1</fullName>
        <shortName>ANK-1</shortName>
    </recommendedName>
    <alternativeName>
        <fullName>Erythrocyte ankyrin</fullName>
    </alternativeName>
</protein>
<proteinExistence type="evidence at protein level"/>
<name>ANK1_MOUSE</name>
<organism>
    <name type="scientific">Mus musculus</name>
    <name type="common">Mouse</name>
    <dbReference type="NCBI Taxonomy" id="10090"/>
    <lineage>
        <taxon>Eukaryota</taxon>
        <taxon>Metazoa</taxon>
        <taxon>Chordata</taxon>
        <taxon>Craniata</taxon>
        <taxon>Vertebrata</taxon>
        <taxon>Euteleostomi</taxon>
        <taxon>Mammalia</taxon>
        <taxon>Eutheria</taxon>
        <taxon>Euarchontoglires</taxon>
        <taxon>Glires</taxon>
        <taxon>Rodentia</taxon>
        <taxon>Myomorpha</taxon>
        <taxon>Muroidea</taxon>
        <taxon>Muridae</taxon>
        <taxon>Murinae</taxon>
        <taxon>Mus</taxon>
        <taxon>Mus</taxon>
    </lineage>
</organism>
<comment type="function">
    <text evidence="2">Component of the ankyrin-1 complex, a multiprotein complex involved in the stability and shape of the erythrocyte membrane. Attaches integral membrane proteins to cytoskeletal elements; binds to the erythrocyte membrane protein band 4.2, to Na-K ATPase, to the lymphocyte membrane protein GP85, and to the cytoskeletal proteins fodrin, tubulin, vimentin and desmin. Erythrocyte ankyrins also link spectrin (beta chain) to the cytoplasmic domain of the erythrocytes anion exchange protein; they retain most or all of these binding functions.</text>
</comment>
<comment type="subunit">
    <text evidence="2">Component of the ankyrin-1 complex in the erythrocyte, composed of ANK1, RHCE, RHAG, SLC4A1, EPB42, GYPA, GYPB and AQP1. Interacts with a number of integral membrane proteins and cytoskeletal proteins. Interacts (via N-terminus) with SPTB/spectrin (beta chain). Also interacts with TTN/titin. Isoform Mu17 interacts with OBSCN isoform 3/obscurin. Interacts with HIF1AN. Interacts (via ANK 1-5 repeats) with RHCE; this interaction mediates the primary membrane attachment site for ANK1. Interacts (via ANK 1-2 repeats) with AQP1 (via the N-terminal). Interacts (via ANK 1-13 repeats) with EPB42. Interacts directly with SLC4A1 (via the cytoplasmic domain); this interaction is mediated by the SLC4A1 Band 3-II and Band 3-III dimers.</text>
</comment>
<comment type="subcellular location">
    <molecule>Isoform Er1</molecule>
    <subcellularLocation>
        <location evidence="1">Cytoplasm</location>
        <location evidence="1">Cytoskeleton</location>
    </subcellularLocation>
    <text evidence="1">Probably the other erythrocyte (Er) isoforms, are located near the surface of erythrocytic plasma membrane.</text>
</comment>
<comment type="subcellular location">
    <molecule>Isoform Mu7</molecule>
    <subcellularLocation>
        <location evidence="1">Membrane</location>
    </subcellularLocation>
</comment>
<comment type="subcellular location">
    <molecule>Isoform Mu8</molecule>
    <subcellularLocation>
        <location evidence="1">Sarcoplasmic reticulum</location>
    </subcellularLocation>
</comment>
<comment type="alternative products">
    <event type="alternative promoter"/>
    <event type="alternative splicing"/>
    <isoform>
        <id>Q02357-1</id>
        <name>Er1</name>
        <sequence type="displayed"/>
    </isoform>
    <isoform>
        <id>Q02357-2</id>
        <name>Br2</name>
        <name>Cb14/11</name>
        <sequence type="described" ref="VSP_018453 VSP_018455 VSP_018457"/>
    </isoform>
    <isoform>
        <id>Q02357-3</id>
        <name>Er3</name>
        <name>Er18</name>
        <sequence type="described" ref="VSP_018460"/>
    </isoform>
    <isoform>
        <id>Q02357-4</id>
        <name>Br4</name>
        <name>Cb12</name>
        <sequence type="described" ref="VSP_018459"/>
    </isoform>
    <isoform>
        <id>Q02357-5</id>
        <name>5</name>
        <sequence type="described" ref="VSP_018454 VSP_018456"/>
    </isoform>
    <isoform>
        <id>Q02357-6</id>
        <name>6</name>
        <sequence type="described" ref="VSP_018454 VSP_018455"/>
    </isoform>
    <isoform>
        <id>Q02357-7</id>
        <name>Mu7</name>
        <name>skAnk1</name>
        <sequence type="described" ref="VSP_018452 VSP_018458"/>
    </isoform>
    <isoform>
        <id>Q02357-8</id>
        <name>Mu8</name>
        <sequence type="described" ref="VSP_018452 VSP_018458 VSP_018460"/>
    </isoform>
</comment>
<comment type="domain">
    <text evidence="1">The 55 kDa regulatory domain is involved in regulating binding of SPTB/spectrin (beta chain) and SLC4A1/erythrocyte membrane protein band 3.</text>
</comment>
<comment type="domain">
    <text evidence="1">The tandem configuration of the two ZU5 and the UPA domains forms a structural supramodule termed ZZU. ZU5-1 mediates interaction with beta-spectrin, and the ZU5-1/UPA interface is required for ankyrin's function other than binding to spectrin (By similarity).</text>
</comment>
<comment type="domain">
    <text evidence="2">The ANK repeat region forms a spiral around a large central cavity and is involved in binding of ion transporters. Adopts a T-shaped arrangement, in the ankyrin-1 complex, in which ANK 1-5 repeats are orthogonal to ANK 6-24 repeats, with the peptide binding groove of ANK 1-5 repeats oriented toward the membrane. The rearrangement of the ANK 1-5 repeats orients the canonical protein binding groove to directly face the membrane, to interact the membrane-embedded targets RHCE and AQP1.</text>
</comment>
<comment type="PTM">
    <text evidence="1">Regulated by phosphorylation.</text>
</comment>
<comment type="PTM">
    <text evidence="1">Acylated by palmitic acid group(s).</text>
</comment>
<comment type="PTM">
    <text evidence="1">Hydroxylated by HIF1AN at several asparagine and 1 aspartate residue within ANK repeat region; hydroxylation seems to increase the conformational stability of this region and may also modulate protein-protein interactions mediated by the ANK repeat region.</text>
</comment>
<comment type="miscellaneous">
    <molecule>Isoform Er1</molecule>
    <text>Produced by alternative promoter usage.</text>
</comment>
<comment type="miscellaneous">
    <molecule>Isoform Br2</molecule>
    <text evidence="11">Produced by alternative splicing of isoform Er1.</text>
</comment>
<comment type="miscellaneous">
    <molecule>Isoform Er3</molecule>
    <text evidence="11">Incomplete sequence. Produced by alternative splicing of isoform Er1.</text>
</comment>
<comment type="miscellaneous">
    <molecule>Isoform Br4</molecule>
    <text evidence="11">Incomplete sequence. Produced by alternative splicing of isoform Er1.</text>
</comment>
<comment type="miscellaneous">
    <molecule>Isoform 5</molecule>
    <text evidence="11">Produced by alternative splicing of isoform Er1.</text>
</comment>
<comment type="miscellaneous">
    <molecule>Isoform 6</molecule>
    <text evidence="11">Produced by alternative splicing of isoform Er1.</text>
</comment>
<comment type="miscellaneous">
    <molecule>Isoform Mu7</molecule>
    <text evidence="11">Produced by alternative promoter usage.</text>
</comment>
<comment type="miscellaneous">
    <molecule>Isoform Mu8</molecule>
    <text evidence="11">Produced by alternative splicing of isoform Mu7.</text>
</comment>
<reference key="1">
    <citation type="journal article" date="1992" name="Mamm. Genome">
        <title>Murine erythrocyte ankyrin cDNA: highly conserved regions of the regulatory domain.</title>
        <authorList>
            <person name="White R.A."/>
            <person name="Birkenmeier C.S."/>
            <person name="Peters L.L."/>
            <person name="Barker J.E."/>
            <person name="Lux S.E."/>
        </authorList>
    </citation>
    <scope>NUCLEOTIDE SEQUENCE [MRNA] (ISOFORM ER1)</scope>
    <source>
        <tissue>Erythrocyte</tissue>
    </source>
</reference>
<reference key="2">
    <citation type="journal article" date="1993" name="J. Biol. Chem.">
        <title>Complex patterns of sequence variation and multiple 5' and 3' ends are found among transcripts of the erythroid ankyrin gene.</title>
        <authorList>
            <person name="Birkenmeier C.S."/>
            <person name="White R.A."/>
            <person name="Peters L.L."/>
            <person name="Hall E.J."/>
            <person name="Lux S.E."/>
            <person name="Barker J.E."/>
        </authorList>
    </citation>
    <scope>NUCLEOTIDE SEQUENCE [MRNA] (ISOFORMS BR2; ER3 AND BR4)</scope>
    <source>
        <strain>C57BL/6J</strain>
        <tissue>Cerebellum</tissue>
    </source>
</reference>
<reference key="3">
    <citation type="journal article" date="1998" name="Genomics">
        <title>An alternative first exon in the distal end of the erythroid ankyrin gene leads to production of a small isoform containing an NH2-terminal membrane anchor.</title>
        <authorList>
            <person name="Birkenmeier C.S."/>
            <person name="Sharp J.J."/>
            <person name="Gifford E.J."/>
            <person name="Deveau S.A."/>
            <person name="Barker J.E."/>
        </authorList>
    </citation>
    <scope>NUCLEOTIDE SEQUENCE [MRNA] (ISOFORM MU7)</scope>
    <scope>TISSUE SPECIFICITY</scope>
    <scope>SUBCELLULAR LOCATION</scope>
    <source>
        <strain>C57BL/6J</strain>
        <tissue>Skeletal muscle</tissue>
    </source>
</reference>
<reference key="4">
    <citation type="journal article" date="2005" name="Science">
        <title>The transcriptional landscape of the mammalian genome.</title>
        <authorList>
            <person name="Carninci P."/>
            <person name="Kasukawa T."/>
            <person name="Katayama S."/>
            <person name="Gough J."/>
            <person name="Frith M.C."/>
            <person name="Maeda N."/>
            <person name="Oyama R."/>
            <person name="Ravasi T."/>
            <person name="Lenhard B."/>
            <person name="Wells C."/>
            <person name="Kodzius R."/>
            <person name="Shimokawa K."/>
            <person name="Bajic V.B."/>
            <person name="Brenner S.E."/>
            <person name="Batalov S."/>
            <person name="Forrest A.R."/>
            <person name="Zavolan M."/>
            <person name="Davis M.J."/>
            <person name="Wilming L.G."/>
            <person name="Aidinis V."/>
            <person name="Allen J.E."/>
            <person name="Ambesi-Impiombato A."/>
            <person name="Apweiler R."/>
            <person name="Aturaliya R.N."/>
            <person name="Bailey T.L."/>
            <person name="Bansal M."/>
            <person name="Baxter L."/>
            <person name="Beisel K.W."/>
            <person name="Bersano T."/>
            <person name="Bono H."/>
            <person name="Chalk A.M."/>
            <person name="Chiu K.P."/>
            <person name="Choudhary V."/>
            <person name="Christoffels A."/>
            <person name="Clutterbuck D.R."/>
            <person name="Crowe M.L."/>
            <person name="Dalla E."/>
            <person name="Dalrymple B.P."/>
            <person name="de Bono B."/>
            <person name="Della Gatta G."/>
            <person name="di Bernardo D."/>
            <person name="Down T."/>
            <person name="Engstrom P."/>
            <person name="Fagiolini M."/>
            <person name="Faulkner G."/>
            <person name="Fletcher C.F."/>
            <person name="Fukushima T."/>
            <person name="Furuno M."/>
            <person name="Futaki S."/>
            <person name="Gariboldi M."/>
            <person name="Georgii-Hemming P."/>
            <person name="Gingeras T.R."/>
            <person name="Gojobori T."/>
            <person name="Green R.E."/>
            <person name="Gustincich S."/>
            <person name="Harbers M."/>
            <person name="Hayashi Y."/>
            <person name="Hensch T.K."/>
            <person name="Hirokawa N."/>
            <person name="Hill D."/>
            <person name="Huminiecki L."/>
            <person name="Iacono M."/>
            <person name="Ikeo K."/>
            <person name="Iwama A."/>
            <person name="Ishikawa T."/>
            <person name="Jakt M."/>
            <person name="Kanapin A."/>
            <person name="Katoh M."/>
            <person name="Kawasawa Y."/>
            <person name="Kelso J."/>
            <person name="Kitamura H."/>
            <person name="Kitano H."/>
            <person name="Kollias G."/>
            <person name="Krishnan S.P."/>
            <person name="Kruger A."/>
            <person name="Kummerfeld S.K."/>
            <person name="Kurochkin I.V."/>
            <person name="Lareau L.F."/>
            <person name="Lazarevic D."/>
            <person name="Lipovich L."/>
            <person name="Liu J."/>
            <person name="Liuni S."/>
            <person name="McWilliam S."/>
            <person name="Madan Babu M."/>
            <person name="Madera M."/>
            <person name="Marchionni L."/>
            <person name="Matsuda H."/>
            <person name="Matsuzawa S."/>
            <person name="Miki H."/>
            <person name="Mignone F."/>
            <person name="Miyake S."/>
            <person name="Morris K."/>
            <person name="Mottagui-Tabar S."/>
            <person name="Mulder N."/>
            <person name="Nakano N."/>
            <person name="Nakauchi H."/>
            <person name="Ng P."/>
            <person name="Nilsson R."/>
            <person name="Nishiguchi S."/>
            <person name="Nishikawa S."/>
            <person name="Nori F."/>
            <person name="Ohara O."/>
            <person name="Okazaki Y."/>
            <person name="Orlando V."/>
            <person name="Pang K.C."/>
            <person name="Pavan W.J."/>
            <person name="Pavesi G."/>
            <person name="Pesole G."/>
            <person name="Petrovsky N."/>
            <person name="Piazza S."/>
            <person name="Reed J."/>
            <person name="Reid J.F."/>
            <person name="Ring B.Z."/>
            <person name="Ringwald M."/>
            <person name="Rost B."/>
            <person name="Ruan Y."/>
            <person name="Salzberg S.L."/>
            <person name="Sandelin A."/>
            <person name="Schneider C."/>
            <person name="Schoenbach C."/>
            <person name="Sekiguchi K."/>
            <person name="Semple C.A."/>
            <person name="Seno S."/>
            <person name="Sessa L."/>
            <person name="Sheng Y."/>
            <person name="Shibata Y."/>
            <person name="Shimada H."/>
            <person name="Shimada K."/>
            <person name="Silva D."/>
            <person name="Sinclair B."/>
            <person name="Sperling S."/>
            <person name="Stupka E."/>
            <person name="Sugiura K."/>
            <person name="Sultana R."/>
            <person name="Takenaka Y."/>
            <person name="Taki K."/>
            <person name="Tammoja K."/>
            <person name="Tan S.L."/>
            <person name="Tang S."/>
            <person name="Taylor M.S."/>
            <person name="Tegner J."/>
            <person name="Teichmann S.A."/>
            <person name="Ueda H.R."/>
            <person name="van Nimwegen E."/>
            <person name="Verardo R."/>
            <person name="Wei C.L."/>
            <person name="Yagi K."/>
            <person name="Yamanishi H."/>
            <person name="Zabarovsky E."/>
            <person name="Zhu S."/>
            <person name="Zimmer A."/>
            <person name="Hide W."/>
            <person name="Bult C."/>
            <person name="Grimmond S.M."/>
            <person name="Teasdale R.D."/>
            <person name="Liu E.T."/>
            <person name="Brusic V."/>
            <person name="Quackenbush J."/>
            <person name="Wahlestedt C."/>
            <person name="Mattick J.S."/>
            <person name="Hume D.A."/>
            <person name="Kai C."/>
            <person name="Sasaki D."/>
            <person name="Tomaru Y."/>
            <person name="Fukuda S."/>
            <person name="Kanamori-Katayama M."/>
            <person name="Suzuki M."/>
            <person name="Aoki J."/>
            <person name="Arakawa T."/>
            <person name="Iida J."/>
            <person name="Imamura K."/>
            <person name="Itoh M."/>
            <person name="Kato T."/>
            <person name="Kawaji H."/>
            <person name="Kawagashira N."/>
            <person name="Kawashima T."/>
            <person name="Kojima M."/>
            <person name="Kondo S."/>
            <person name="Konno H."/>
            <person name="Nakano K."/>
            <person name="Ninomiya N."/>
            <person name="Nishio T."/>
            <person name="Okada M."/>
            <person name="Plessy C."/>
            <person name="Shibata K."/>
            <person name="Shiraki T."/>
            <person name="Suzuki S."/>
            <person name="Tagami M."/>
            <person name="Waki K."/>
            <person name="Watahiki A."/>
            <person name="Okamura-Oho Y."/>
            <person name="Suzuki H."/>
            <person name="Kawai J."/>
            <person name="Hayashizaki Y."/>
        </authorList>
    </citation>
    <scope>NUCLEOTIDE SEQUENCE [LARGE SCALE MRNA] (ISOFORMS BR2; 5; 6 AND MU8)</scope>
    <source>
        <strain>C57BL/6J</strain>
        <tissue>Forelimb</tissue>
        <tissue>Inner ear</tissue>
    </source>
</reference>
<reference key="5">
    <citation type="journal article" date="2004" name="Genome Res.">
        <title>The status, quality, and expansion of the NIH full-length cDNA project: the Mammalian Gene Collection (MGC).</title>
        <authorList>
            <consortium name="The MGC Project Team"/>
        </authorList>
    </citation>
    <scope>NUCLEOTIDE SEQUENCE [LARGE SCALE MRNA] (ISOFORM MU7)</scope>
    <source>
        <tissue>Heart</tissue>
        <tissue>Lung</tissue>
    </source>
</reference>
<reference key="6">
    <citation type="submission" date="1996-10" db="EMBL/GenBank/DDBJ databases">
        <authorList>
            <person name="Birkenmeier C.B."/>
            <person name="Sharp J.J."/>
            <person name="Hall E.J."/>
            <person name="Deveau S.A."/>
            <person name="Barker J.E."/>
        </authorList>
    </citation>
    <scope>PARTIAL NUCLEOTIDE SEQUENCE [GENOMIC DNA]</scope>
    <source>
        <strain>C57BL/6J</strain>
    </source>
</reference>
<reference key="7">
    <citation type="journal article" date="2011" name="J. Biol. Chem.">
        <title>Asparagine and aspartate hydroxylation of the cytoskeletal ankyrin family is catalyzed by factor-inhibiting hypoxia-inducible factor.</title>
        <authorList>
            <person name="Yang M."/>
            <person name="Ge W."/>
            <person name="Chowdhury R."/>
            <person name="Claridge T.D."/>
            <person name="Kramer H.B."/>
            <person name="Schmierer B."/>
            <person name="McDonough M.A."/>
            <person name="Gong L."/>
            <person name="Kessler B.M."/>
            <person name="Ratcliffe P.J."/>
            <person name="Coleman M.L."/>
            <person name="Schofield C.J."/>
        </authorList>
    </citation>
    <scope>PROTEIN SEQUENCE OF 95-106</scope>
    <scope>HYDROXYLATION AT ASN-101</scope>
</reference>
<reference key="8">
    <citation type="journal article" date="1997" name="J. Cell Biol.">
        <title>Small, membrane-bound, alternatively spliced forms of ankyrin 1 associated with the sarcoplasmic reticulum of mammalian skeletal muscle.</title>
        <authorList>
            <person name="Zhou D."/>
            <person name="Birkenmeier C.S."/>
            <person name="Williams M.W."/>
            <person name="Sharp J.J."/>
            <person name="Barker J.E."/>
            <person name="Bloch R.J."/>
        </authorList>
    </citation>
    <scope>SUBCELLULAR LOCATION</scope>
</reference>
<reference key="9">
    <citation type="journal article" date="2006" name="Mol. Cell. Proteomics">
        <title>Comprehensive identification of phosphorylation sites in postsynaptic density preparations.</title>
        <authorList>
            <person name="Trinidad J.C."/>
            <person name="Specht C.G."/>
            <person name="Thalhammer A."/>
            <person name="Schoepfer R."/>
            <person name="Burlingame A.L."/>
        </authorList>
    </citation>
    <scope>PHOSPHORYLATION [LARGE SCALE ANALYSIS] AT SER-852 AND THR-862</scope>
    <scope>IDENTIFICATION BY MASS SPECTROMETRY [LARGE SCALE ANALYSIS]</scope>
    <source>
        <tissue>Brain</tissue>
    </source>
</reference>
<reference key="10">
    <citation type="journal article" date="2007" name="Proc. Natl. Acad. Sci. U.S.A.">
        <title>Large-scale phosphorylation analysis of mouse liver.</title>
        <authorList>
            <person name="Villen J."/>
            <person name="Beausoleil S.A."/>
            <person name="Gerber S.A."/>
            <person name="Gygi S.P."/>
        </authorList>
    </citation>
    <scope>PHOSPHORYLATION [LARGE SCALE ANALYSIS] AT THR-957 AND SER-1388</scope>
    <scope>IDENTIFICATION BY MASS SPECTROMETRY [LARGE SCALE ANALYSIS]</scope>
    <source>
        <tissue>Liver</tissue>
    </source>
</reference>
<reference key="11">
    <citation type="journal article" date="2008" name="J. Proteome Res.">
        <title>Large-scale identification and evolution indexing of tyrosine phosphorylation sites from murine brain.</title>
        <authorList>
            <person name="Ballif B.A."/>
            <person name="Carey G.R."/>
            <person name="Sunyaev S.R."/>
            <person name="Gygi S.P."/>
        </authorList>
    </citation>
    <scope>PHOSPHORYLATION [LARGE SCALE ANALYSIS] AT TYR-1069</scope>
    <scope>IDENTIFICATION BY MASS SPECTROMETRY [LARGE SCALE ANALYSIS]</scope>
    <source>
        <tissue>Brain</tissue>
    </source>
</reference>
<reference key="12">
    <citation type="journal article" date="2010" name="Cell">
        <title>A tissue-specific atlas of mouse protein phosphorylation and expression.</title>
        <authorList>
            <person name="Huttlin E.L."/>
            <person name="Jedrychowski M.P."/>
            <person name="Elias J.E."/>
            <person name="Goswami T."/>
            <person name="Rad R."/>
            <person name="Beausoleil S.A."/>
            <person name="Villen J."/>
            <person name="Haas W."/>
            <person name="Sowa M.E."/>
            <person name="Gygi S.P."/>
        </authorList>
    </citation>
    <scope>PHOSPHORYLATION [LARGE SCALE ANALYSIS] AT SER-777; SER-813; SER-852; THR-862; THR-957; SER-1078; SER-1386; SER-1388; THR-1396; SER-1424; SER-1473; SER-1482 AND SER-1612</scope>
    <scope>PHOSPHORYLATION [LARGE SCALE ANALYSIS] AT SER-55 (ISOFORMS MU7 AND MU8)</scope>
    <scope>IDENTIFICATION BY MASS SPECTROMETRY [LARGE SCALE ANALYSIS]</scope>
    <source>
        <tissue>Brain</tissue>
        <tissue>Brown adipose tissue</tissue>
        <tissue>Heart</tissue>
        <tissue>Kidney</tissue>
        <tissue>Liver</tissue>
        <tissue>Lung</tissue>
        <tissue>Pancreas</tissue>
        <tissue>Spleen</tissue>
        <tissue>Testis</tissue>
    </source>
</reference>
<evidence type="ECO:0000250" key="1"/>
<evidence type="ECO:0000250" key="2">
    <source>
        <dbReference type="UniProtKB" id="P16157"/>
    </source>
</evidence>
<evidence type="ECO:0000255" key="3">
    <source>
        <dbReference type="PROSITE-ProRule" id="PRU00064"/>
    </source>
</evidence>
<evidence type="ECO:0000255" key="4">
    <source>
        <dbReference type="PROSITE-ProRule" id="PRU00485"/>
    </source>
</evidence>
<evidence type="ECO:0000256" key="5">
    <source>
        <dbReference type="SAM" id="MobiDB-lite"/>
    </source>
</evidence>
<evidence type="ECO:0000269" key="6">
    <source>
    </source>
</evidence>
<evidence type="ECO:0000303" key="7">
    <source>
    </source>
</evidence>
<evidence type="ECO:0000303" key="8">
    <source>
    </source>
</evidence>
<evidence type="ECO:0000303" key="9">
    <source>
    </source>
</evidence>
<evidence type="ECO:0000303" key="10">
    <source>
    </source>
</evidence>
<evidence type="ECO:0000305" key="11"/>
<evidence type="ECO:0000312" key="12">
    <source>
        <dbReference type="MGI" id="MGI:88024"/>
    </source>
</evidence>
<evidence type="ECO:0007744" key="13">
    <source>
    </source>
</evidence>
<evidence type="ECO:0007744" key="14">
    <source>
    </source>
</evidence>
<evidence type="ECO:0007744" key="15">
    <source>
    </source>
</evidence>
<evidence type="ECO:0007744" key="16">
    <source>
    </source>
</evidence>
<sequence length="1862" mass="204227">MGFCKADAATSFLRAARSGNLDKALDHLRNGVDINTCNQNGLNGLHLASKEGHVKMVVELLHKEIILETTTKKGNTALHIAALAGQDEVVRELVNYGANVNAQSQKGFTPLYMAAQENHLEVVKFLLENGANQNVATEDGFTPLAVALQQGHENVVAHLINYGTKGKVRLPALHIAARNDDTRTAAVLLQNDPNPDVLSKTGFTPLHIAAHYENLNVAQLLLNRGASVNFTPQNGITPLHIASRRGNVIMVRLLLDRGAQIETRTKDELTPLHCAARNGHVRISEILLDHGAPIQAKTKNGLSPIHMAAQGDHLDCVRLLLQYNAEIDDITLDHLTPLHVAAHCGHHRVAKVLLDKGAKPNSRALNGFTPLHIACKKNHIRVMELLLKTGASIDAVTESGLTPLHVASFMGHLPIVKNLLQRGASPNVSNVKVETPLHMAARAGHTEVAKYLLQNKAKANAKAKDDQTPLHCAARIGHTGMVKLLLENGASPNLATTAGHTPLHTAAREGHVDTALALLEKEASQACMTKKGFTPLHVAAKYGKVRLAELLLEHDAHPNAAGKNGLTPLHVAVHHNNLDIVKLLLPRGGSPHSPAWNGYTPLHIAAKQNQIEVARSLLQYGGSANAESVQGVTPLHLAAQEGHTEMVALLLSKQANGNLGNKSGLTPLHLVSQEGHVPVADVLIKHGVTVDATTRMGYTPLHVASHYGNIKLVKFLLQHQADVNAKTKLGYSPLHQAAQQGHTDIVTLLLKNGASPNEVSSNGTTPLAIAKRLGYISVTDVLKVVTDETSVVLVSDKHRMSYPETVDEILDVSEDEGDELVGSKAERRDSRDVGEEKELLDFVPKLDQVVESPAIPRIPCVTPETVVIRSEDQEQASKEYDEDSLIPSSPATETSDNISPVASPVHTGFLVSFMVDARGGSMRGSRHNGLRVVIPPRTCAAPTRITCRLVKPQKLNTPPPLAEEEGLASRIIALGPTGAQFLSPVIVEIPHFASHGRGDRELVVLRSENGSVWKEHKSRYGESYLDQILNGMDEELGSLEELEKKRVCRIITTDFPLYFVIMSRLCQDYDTIGPEGGSLRSKLVPLVQATFPENAVTKKVKLALQAQPVPDELVTKLLGNQATFSPIVTVEPRRRKFHRPIGLRIPLPPSWTDNPRDSGEGDTTSLRLLCSVIGGTDQAQWEDITGTTKLIYANECANFTTNVSARFWLSDCPRTAEAVHFATLLYKELTAVPYMAKFVIFAKMNDAREGRLRCYCMTDDKVDKTLEQHENFVEVARSRDIEVLEGMPLFAELSGNLVPVKKAAQQRSFHFQSFRENRLAIPVKVRDSSREPGGFLSFLRKTMKYEDTQHILCHLNITMPPCTKGSGAEDRRRTLTPLTLRYSILSESRLGFTSDTDRVEMRMAVIREHLGLSWAELARELQFSVEDINRIRVENPNSLLDQSTALLTLWVDREGENAKMENLYTALRNIDRSEIVNMLEGSGRQSRNLKPERRHGDREYSLSPSQVNGYSSLQDELLSPASLQYALPSPLCADQYWNEVTVIDAIPLAATEHDTMLEMSDMQVWSAGLTPSLVTAEDSSLECSKAEDSDAIPEWKLEGAHSEDTQGPELGSQDLVEDDTVDSDATNGLADLLGQEEGQRSEKKRQEVSGTEQDTETEVSLVSGQQRVHARITDSPSVRQVLDRSQARTLDWDKQGSTAVHPQEATQSSWQEEVTQGPHSFQRRITTIQGPEPGALQEYEQVLVSTREHVQRGPPETGSPKAGKEPSLWAPESAFSQEVQGDELQNIPGEQVTEEQFTDEQGNIVTKKIIRKVVRQVDSSGAIDTQQHEEVELRGSGLQPDLIEGRKGAQIVKRASLKRGKQ</sequence>
<gene>
    <name evidence="12" type="primary">Ank1</name>
    <name type="synonym">Ank-1</name>
</gene>
<accession>Q02357</accession>
<accession>P70440</accession>
<accession>P97446</accession>
<accession>P97941</accession>
<accession>Q3TZ35</accession>
<accession>Q3UH42</accession>
<accession>Q3UHP2</accession>
<accession>Q3UYY7</accession>
<accession>Q61302</accession>
<accession>Q61303</accession>
<accession>Q78E45</accession>
<dbReference type="EMBL" id="M84756">
    <property type="protein sequence ID" value="AAA37236.1"/>
    <property type="molecule type" value="mRNA"/>
</dbReference>
<dbReference type="EMBL" id="X69063">
    <property type="protein sequence ID" value="CAA48801.1"/>
    <property type="molecule type" value="mRNA"/>
</dbReference>
<dbReference type="EMBL" id="X69064">
    <property type="protein sequence ID" value="CAA48802.1"/>
    <property type="molecule type" value="mRNA"/>
</dbReference>
<dbReference type="EMBL" id="U73972">
    <property type="protein sequence ID" value="AAC24156.1"/>
    <property type="molecule type" value="mRNA"/>
</dbReference>
<dbReference type="EMBL" id="AK134267">
    <property type="protein sequence ID" value="BAE22074.1"/>
    <property type="molecule type" value="mRNA"/>
</dbReference>
<dbReference type="EMBL" id="AK147278">
    <property type="protein sequence ID" value="BAE27815.1"/>
    <property type="molecule type" value="mRNA"/>
</dbReference>
<dbReference type="EMBL" id="AK147597">
    <property type="protein sequence ID" value="BAE28015.1"/>
    <property type="molecule type" value="mRNA"/>
</dbReference>
<dbReference type="EMBL" id="AK158131">
    <property type="protein sequence ID" value="BAE34375.1"/>
    <property type="molecule type" value="mRNA"/>
</dbReference>
<dbReference type="EMBL" id="BC061219">
    <property type="protein sequence ID" value="AAH61219.1"/>
    <property type="molecule type" value="mRNA"/>
</dbReference>
<dbReference type="EMBL" id="U76758">
    <property type="protein sequence ID" value="AAB37323.1"/>
    <property type="molecule type" value="Genomic_DNA"/>
</dbReference>
<dbReference type="EMBL" id="U76758">
    <property type="protein sequence ID" value="AAB37324.1"/>
    <property type="molecule type" value="Genomic_DNA"/>
</dbReference>
<dbReference type="EMBL" id="U76758">
    <property type="protein sequence ID" value="AAB37325.1"/>
    <property type="molecule type" value="Genomic_DNA"/>
</dbReference>
<dbReference type="CCDS" id="CCDS22187.1">
    <molecule id="Q02357-2"/>
</dbReference>
<dbReference type="CCDS" id="CCDS52523.1">
    <molecule id="Q02357-6"/>
</dbReference>
<dbReference type="CCDS" id="CCDS72099.1">
    <molecule id="Q02357-5"/>
</dbReference>
<dbReference type="CCDS" id="CCDS72100.1">
    <molecule id="Q02357-1"/>
</dbReference>
<dbReference type="CCDS" id="CCDS72101.1">
    <molecule id="Q02357-4"/>
</dbReference>
<dbReference type="CCDS" id="CCDS80864.1">
    <molecule id="Q02357-7"/>
</dbReference>
<dbReference type="CCDS" id="CCDS80865.1">
    <molecule id="Q02357-8"/>
</dbReference>
<dbReference type="PIR" id="I49502">
    <property type="entry name" value="I49502"/>
</dbReference>
<dbReference type="PIR" id="S37771">
    <property type="entry name" value="S37771"/>
</dbReference>
<dbReference type="PIR" id="S37772">
    <property type="entry name" value="S37772"/>
</dbReference>
<dbReference type="RefSeq" id="NP_001104253.1">
    <property type="nucleotide sequence ID" value="NM_001110783.3"/>
</dbReference>
<dbReference type="RefSeq" id="NP_001264209.1">
    <molecule id="Q02357-5"/>
    <property type="nucleotide sequence ID" value="NM_001277280.2"/>
</dbReference>
<dbReference type="RefSeq" id="NP_001264210.1">
    <property type="nucleotide sequence ID" value="NM_001277281.2"/>
</dbReference>
<dbReference type="RefSeq" id="NP_001264215.1">
    <property type="nucleotide sequence ID" value="NM_001277286.2"/>
</dbReference>
<dbReference type="RefSeq" id="NP_001264218.1">
    <property type="nucleotide sequence ID" value="NM_001277289.2"/>
</dbReference>
<dbReference type="RefSeq" id="NP_001297365.1">
    <molecule id="Q02357-8"/>
    <property type="nucleotide sequence ID" value="NM_001310436.1"/>
</dbReference>
<dbReference type="RefSeq" id="NP_001297366.1">
    <molecule id="Q02357-7"/>
    <property type="nucleotide sequence ID" value="NM_001310437.1"/>
</dbReference>
<dbReference type="RefSeq" id="NP_112435.2">
    <property type="nucleotide sequence ID" value="NM_031158.4"/>
</dbReference>
<dbReference type="SMR" id="Q02357"/>
<dbReference type="BioGRID" id="198101">
    <property type="interactions" value="2"/>
</dbReference>
<dbReference type="FunCoup" id="Q02357">
    <property type="interactions" value="266"/>
</dbReference>
<dbReference type="IntAct" id="Q02357">
    <property type="interactions" value="3"/>
</dbReference>
<dbReference type="MINT" id="Q02357"/>
<dbReference type="STRING" id="10090.ENSMUSP00000113571"/>
<dbReference type="GlyGen" id="Q02357">
    <property type="glycosylation" value="1 site"/>
</dbReference>
<dbReference type="iPTMnet" id="Q02357"/>
<dbReference type="PhosphoSitePlus" id="Q02357"/>
<dbReference type="SwissPalm" id="Q02357"/>
<dbReference type="jPOST" id="Q02357"/>
<dbReference type="PaxDb" id="10090-ENSMUSP00000113571"/>
<dbReference type="PeptideAtlas" id="Q02357"/>
<dbReference type="ProteomicsDB" id="296294">
    <molecule id="Q02357-1"/>
</dbReference>
<dbReference type="ProteomicsDB" id="296295">
    <molecule id="Q02357-2"/>
</dbReference>
<dbReference type="ProteomicsDB" id="296296">
    <molecule id="Q02357-3"/>
</dbReference>
<dbReference type="ProteomicsDB" id="296297">
    <molecule id="Q02357-4"/>
</dbReference>
<dbReference type="ProteomicsDB" id="296298">
    <molecule id="Q02357-5"/>
</dbReference>
<dbReference type="ProteomicsDB" id="296299">
    <molecule id="Q02357-6"/>
</dbReference>
<dbReference type="ProteomicsDB" id="296300">
    <molecule id="Q02357-7"/>
</dbReference>
<dbReference type="ProteomicsDB" id="296301">
    <molecule id="Q02357-8"/>
</dbReference>
<dbReference type="ABCD" id="Q02357">
    <property type="antibodies" value="3 sequenced antibodies"/>
</dbReference>
<dbReference type="Antibodypedia" id="4229">
    <property type="antibodies" value="436 antibodies from 35 providers"/>
</dbReference>
<dbReference type="DNASU" id="11733"/>
<dbReference type="Ensembl" id="ENSMUST00000033947.15">
    <molecule id="Q02357-8"/>
    <property type="protein sequence ID" value="ENSMUSP00000033947.9"/>
    <property type="gene ID" value="ENSMUSG00000031543.19"/>
</dbReference>
<dbReference type="Ensembl" id="ENSMUST00000110688.9">
    <molecule id="Q02357-5"/>
    <property type="protein sequence ID" value="ENSMUSP00000106316.3"/>
    <property type="gene ID" value="ENSMUSG00000031543.19"/>
</dbReference>
<dbReference type="Ensembl" id="ENSMUST00000121075.8">
    <molecule id="Q02357-7"/>
    <property type="protein sequence ID" value="ENSMUSP00000112966.2"/>
    <property type="gene ID" value="ENSMUSG00000031543.19"/>
</dbReference>
<dbReference type="GeneID" id="11733"/>
<dbReference type="KEGG" id="mmu:11733"/>
<dbReference type="UCSC" id="uc009lee.3">
    <molecule id="Q02357-6"/>
    <property type="organism name" value="mouse"/>
</dbReference>
<dbReference type="UCSC" id="uc009lef.3">
    <molecule id="Q02357-5"/>
    <property type="organism name" value="mouse"/>
</dbReference>
<dbReference type="UCSC" id="uc009lel.2">
    <molecule id="Q02357-7"/>
    <property type="organism name" value="mouse"/>
</dbReference>
<dbReference type="UCSC" id="uc009lem.2">
    <molecule id="Q02357-8"/>
    <property type="organism name" value="mouse"/>
</dbReference>
<dbReference type="AGR" id="MGI:88024"/>
<dbReference type="CTD" id="286"/>
<dbReference type="MGI" id="MGI:88024">
    <property type="gene designation" value="Ank1"/>
</dbReference>
<dbReference type="VEuPathDB" id="HostDB:ENSMUSG00000031543"/>
<dbReference type="eggNOG" id="KOG4177">
    <property type="taxonomic scope" value="Eukaryota"/>
</dbReference>
<dbReference type="GeneTree" id="ENSGT00940000155760"/>
<dbReference type="HOGENOM" id="CLU_000134_7_3_1"/>
<dbReference type="InParanoid" id="Q02357"/>
<dbReference type="OrthoDB" id="20872at2759"/>
<dbReference type="TreeFam" id="TF351263"/>
<dbReference type="Reactome" id="R-MMU-445095">
    <property type="pathway name" value="Interaction between L1 and Ankyrins"/>
</dbReference>
<dbReference type="Reactome" id="R-MMU-447043">
    <property type="pathway name" value="Neurofascin interactions"/>
</dbReference>
<dbReference type="Reactome" id="R-MMU-6807878">
    <property type="pathway name" value="COPI-mediated anterograde transport"/>
</dbReference>
<dbReference type="BioGRID-ORCS" id="11733">
    <property type="hits" value="2 hits in 79 CRISPR screens"/>
</dbReference>
<dbReference type="CD-CODE" id="CE726F99">
    <property type="entry name" value="Postsynaptic density"/>
</dbReference>
<dbReference type="ChiTaRS" id="Ank1">
    <property type="organism name" value="mouse"/>
</dbReference>
<dbReference type="PRO" id="PR:Q02357"/>
<dbReference type="Proteomes" id="UP000000589">
    <property type="component" value="Chromosome 8"/>
</dbReference>
<dbReference type="RNAct" id="Q02357">
    <property type="molecule type" value="protein"/>
</dbReference>
<dbReference type="Bgee" id="ENSMUSG00000031543">
    <property type="expression patterns" value="Expressed in fetal liver hematopoietic progenitor cell and 183 other cell types or tissues"/>
</dbReference>
<dbReference type="ExpressionAtlas" id="Q02357">
    <property type="expression patterns" value="baseline and differential"/>
</dbReference>
<dbReference type="GO" id="GO:0170014">
    <property type="term" value="C:ankyrin-1 complex"/>
    <property type="evidence" value="ECO:0000250"/>
    <property type="project" value="UniProtKB"/>
</dbReference>
<dbReference type="GO" id="GO:0030863">
    <property type="term" value="C:cortical cytoskeleton"/>
    <property type="evidence" value="ECO:0000314"/>
    <property type="project" value="MGI"/>
</dbReference>
<dbReference type="GO" id="GO:0016020">
    <property type="term" value="C:membrane"/>
    <property type="evidence" value="ECO:0000314"/>
    <property type="project" value="MGI"/>
</dbReference>
<dbReference type="GO" id="GO:0016529">
    <property type="term" value="C:sarcoplasmic reticulum"/>
    <property type="evidence" value="ECO:0007669"/>
    <property type="project" value="UniProtKB-SubCell"/>
</dbReference>
<dbReference type="GO" id="GO:0014731">
    <property type="term" value="C:spectrin-associated cytoskeleton"/>
    <property type="evidence" value="ECO:0000315"/>
    <property type="project" value="MGI"/>
</dbReference>
<dbReference type="GO" id="GO:0048821">
    <property type="term" value="P:erythrocyte development"/>
    <property type="evidence" value="ECO:0000315"/>
    <property type="project" value="MGI"/>
</dbReference>
<dbReference type="GO" id="GO:0098662">
    <property type="term" value="P:inorganic cation transmembrane transport"/>
    <property type="evidence" value="ECO:0000315"/>
    <property type="project" value="MGI"/>
</dbReference>
<dbReference type="GO" id="GO:0060586">
    <property type="term" value="P:multicellular organismal-level iron ion homeostasis"/>
    <property type="evidence" value="ECO:0000315"/>
    <property type="project" value="MGI"/>
</dbReference>
<dbReference type="GO" id="GO:0006779">
    <property type="term" value="P:porphyrin-containing compound biosynthetic process"/>
    <property type="evidence" value="ECO:0000315"/>
    <property type="project" value="MGI"/>
</dbReference>
<dbReference type="GO" id="GO:0007165">
    <property type="term" value="P:signal transduction"/>
    <property type="evidence" value="ECO:0007669"/>
    <property type="project" value="InterPro"/>
</dbReference>
<dbReference type="CDD" id="cd08805">
    <property type="entry name" value="Death_ank1"/>
    <property type="match status" value="1"/>
</dbReference>
<dbReference type="FunFam" id="1.10.533.10:FF:000010">
    <property type="entry name" value="Ankyrin 1"/>
    <property type="match status" value="1"/>
</dbReference>
<dbReference type="FunFam" id="1.25.40.20:FF:000003">
    <property type="entry name" value="Ankyrin, isoform B"/>
    <property type="match status" value="1"/>
</dbReference>
<dbReference type="FunFam" id="2.60.40.2660:FF:000002">
    <property type="entry name" value="Ankyrin-1 isoform B"/>
    <property type="match status" value="1"/>
</dbReference>
<dbReference type="FunFam" id="1.25.40.20:FF:000001">
    <property type="entry name" value="Ankyrin-2 isoform 2"/>
    <property type="match status" value="1"/>
</dbReference>
<dbReference type="FunFam" id="1.25.40.20:FF:000002">
    <property type="entry name" value="Ankyrin-2 isoform 2"/>
    <property type="match status" value="1"/>
</dbReference>
<dbReference type="FunFam" id="2.60.220.30:FF:000001">
    <property type="entry name" value="Ankyrin-3 isoform 2"/>
    <property type="match status" value="1"/>
</dbReference>
<dbReference type="FunFam" id="2.60.220.30:FF:000002">
    <property type="entry name" value="Ankyrin-3 isoform 2"/>
    <property type="match status" value="1"/>
</dbReference>
<dbReference type="Gene3D" id="2.60.220.30">
    <property type="match status" value="2"/>
</dbReference>
<dbReference type="Gene3D" id="2.60.40.2660">
    <property type="match status" value="1"/>
</dbReference>
<dbReference type="Gene3D" id="1.25.40.20">
    <property type="entry name" value="Ankyrin repeat-containing domain"/>
    <property type="match status" value="3"/>
</dbReference>
<dbReference type="Gene3D" id="1.10.533.10">
    <property type="entry name" value="Death Domain, Fas"/>
    <property type="match status" value="1"/>
</dbReference>
<dbReference type="InterPro" id="IPR002110">
    <property type="entry name" value="Ankyrin_rpt"/>
</dbReference>
<dbReference type="InterPro" id="IPR036770">
    <property type="entry name" value="Ankyrin_rpt-contain_sf"/>
</dbReference>
<dbReference type="InterPro" id="IPR040745">
    <property type="entry name" value="Ankyrin_UPA"/>
</dbReference>
<dbReference type="InterPro" id="IPR011029">
    <property type="entry name" value="DEATH-like_dom_sf"/>
</dbReference>
<dbReference type="InterPro" id="IPR000488">
    <property type="entry name" value="Death_dom"/>
</dbReference>
<dbReference type="InterPro" id="IPR051165">
    <property type="entry name" value="Multifunctional_ANK_Repeat"/>
</dbReference>
<dbReference type="InterPro" id="IPR000906">
    <property type="entry name" value="ZU5_dom"/>
</dbReference>
<dbReference type="PANTHER" id="PTHR24123:SF71">
    <property type="entry name" value="ANKYRIN 1, ERYTHROCYTIC A ISOFORM X1"/>
    <property type="match status" value="1"/>
</dbReference>
<dbReference type="PANTHER" id="PTHR24123">
    <property type="entry name" value="ANKYRIN REPEAT-CONTAINING"/>
    <property type="match status" value="1"/>
</dbReference>
<dbReference type="Pfam" id="PF00023">
    <property type="entry name" value="Ank"/>
    <property type="match status" value="4"/>
</dbReference>
<dbReference type="Pfam" id="PF12796">
    <property type="entry name" value="Ank_2"/>
    <property type="match status" value="7"/>
</dbReference>
<dbReference type="Pfam" id="PF13606">
    <property type="entry name" value="Ank_3"/>
    <property type="match status" value="1"/>
</dbReference>
<dbReference type="Pfam" id="PF00531">
    <property type="entry name" value="Death"/>
    <property type="match status" value="1"/>
</dbReference>
<dbReference type="Pfam" id="PF17809">
    <property type="entry name" value="UPA_2"/>
    <property type="match status" value="1"/>
</dbReference>
<dbReference type="Pfam" id="PF00791">
    <property type="entry name" value="ZU5"/>
    <property type="match status" value="1"/>
</dbReference>
<dbReference type="PRINTS" id="PR01415">
    <property type="entry name" value="ANKYRIN"/>
</dbReference>
<dbReference type="SMART" id="SM00248">
    <property type="entry name" value="ANK"/>
    <property type="match status" value="23"/>
</dbReference>
<dbReference type="SMART" id="SM00005">
    <property type="entry name" value="DEATH"/>
    <property type="match status" value="1"/>
</dbReference>
<dbReference type="SMART" id="SM00218">
    <property type="entry name" value="ZU5"/>
    <property type="match status" value="1"/>
</dbReference>
<dbReference type="SUPFAM" id="SSF48403">
    <property type="entry name" value="Ankyrin repeat"/>
    <property type="match status" value="2"/>
</dbReference>
<dbReference type="SUPFAM" id="SSF47986">
    <property type="entry name" value="DEATH domain"/>
    <property type="match status" value="1"/>
</dbReference>
<dbReference type="PROSITE" id="PS50297">
    <property type="entry name" value="ANK_REP_REGION"/>
    <property type="match status" value="1"/>
</dbReference>
<dbReference type="PROSITE" id="PS50088">
    <property type="entry name" value="ANK_REPEAT"/>
    <property type="match status" value="20"/>
</dbReference>
<dbReference type="PROSITE" id="PS50017">
    <property type="entry name" value="DEATH_DOMAIN"/>
    <property type="match status" value="1"/>
</dbReference>
<dbReference type="PROSITE" id="PS51145">
    <property type="entry name" value="ZU5"/>
    <property type="match status" value="2"/>
</dbReference>
<keyword id="KW-0877">Alternative promoter usage</keyword>
<keyword id="KW-0025">Alternative splicing</keyword>
<keyword id="KW-0040">ANK repeat</keyword>
<keyword id="KW-0963">Cytoplasm</keyword>
<keyword id="KW-0206">Cytoskeleton</keyword>
<keyword id="KW-0903">Direct protein sequencing</keyword>
<keyword id="KW-0379">Hydroxylation</keyword>
<keyword id="KW-0449">Lipoprotein</keyword>
<keyword id="KW-0472">Membrane</keyword>
<keyword id="KW-0597">Phosphoprotein</keyword>
<keyword id="KW-1185">Reference proteome</keyword>
<keyword id="KW-0677">Repeat</keyword>
<keyword id="KW-0703">Sarcoplasmic reticulum</keyword>